<gene>
    <name evidence="1" type="primary">flgI</name>
    <name type="ordered locus">PSPTO_1942</name>
</gene>
<dbReference type="EMBL" id="AE016853">
    <property type="protein sequence ID" value="AAO55460.1"/>
    <property type="molecule type" value="Genomic_DNA"/>
</dbReference>
<dbReference type="RefSeq" id="NP_791765.1">
    <property type="nucleotide sequence ID" value="NC_004578.1"/>
</dbReference>
<dbReference type="RefSeq" id="WP_005767023.1">
    <property type="nucleotide sequence ID" value="NC_004578.1"/>
</dbReference>
<dbReference type="SMR" id="Q884Z4"/>
<dbReference type="STRING" id="223283.PSPTO_1942"/>
<dbReference type="GeneID" id="1183587"/>
<dbReference type="KEGG" id="pst:PSPTO_1942"/>
<dbReference type="PATRIC" id="fig|223283.9.peg.1971"/>
<dbReference type="eggNOG" id="COG1706">
    <property type="taxonomic scope" value="Bacteria"/>
</dbReference>
<dbReference type="HOGENOM" id="CLU_045235_1_0_6"/>
<dbReference type="OrthoDB" id="9786431at2"/>
<dbReference type="PhylomeDB" id="Q884Z4"/>
<dbReference type="Proteomes" id="UP000002515">
    <property type="component" value="Chromosome"/>
</dbReference>
<dbReference type="GO" id="GO:0009428">
    <property type="term" value="C:bacterial-type flagellum basal body, distal rod, P ring"/>
    <property type="evidence" value="ECO:0007669"/>
    <property type="project" value="InterPro"/>
</dbReference>
<dbReference type="GO" id="GO:0030288">
    <property type="term" value="C:outer membrane-bounded periplasmic space"/>
    <property type="evidence" value="ECO:0007669"/>
    <property type="project" value="InterPro"/>
</dbReference>
<dbReference type="GO" id="GO:0005198">
    <property type="term" value="F:structural molecule activity"/>
    <property type="evidence" value="ECO:0007669"/>
    <property type="project" value="InterPro"/>
</dbReference>
<dbReference type="GO" id="GO:0071973">
    <property type="term" value="P:bacterial-type flagellum-dependent cell motility"/>
    <property type="evidence" value="ECO:0007669"/>
    <property type="project" value="InterPro"/>
</dbReference>
<dbReference type="HAMAP" id="MF_00416">
    <property type="entry name" value="FlgI"/>
    <property type="match status" value="1"/>
</dbReference>
<dbReference type="InterPro" id="IPR001782">
    <property type="entry name" value="Flag_FlgI"/>
</dbReference>
<dbReference type="NCBIfam" id="NF003676">
    <property type="entry name" value="PRK05303.1"/>
    <property type="match status" value="1"/>
</dbReference>
<dbReference type="PANTHER" id="PTHR30381">
    <property type="entry name" value="FLAGELLAR P-RING PERIPLASMIC PROTEIN FLGI"/>
    <property type="match status" value="1"/>
</dbReference>
<dbReference type="PANTHER" id="PTHR30381:SF0">
    <property type="entry name" value="FLAGELLAR P-RING PROTEIN"/>
    <property type="match status" value="1"/>
</dbReference>
<dbReference type="Pfam" id="PF02119">
    <property type="entry name" value="FlgI"/>
    <property type="match status" value="1"/>
</dbReference>
<dbReference type="PRINTS" id="PR01010">
    <property type="entry name" value="FLGPRINGFLGI"/>
</dbReference>
<proteinExistence type="inferred from homology"/>
<name>FLGI_PSESM</name>
<reference key="1">
    <citation type="journal article" date="2003" name="Proc. Natl. Acad. Sci. U.S.A.">
        <title>The complete genome sequence of the Arabidopsis and tomato pathogen Pseudomonas syringae pv. tomato DC3000.</title>
        <authorList>
            <person name="Buell C.R."/>
            <person name="Joardar V."/>
            <person name="Lindeberg M."/>
            <person name="Selengut J."/>
            <person name="Paulsen I.T."/>
            <person name="Gwinn M.L."/>
            <person name="Dodson R.J."/>
            <person name="DeBoy R.T."/>
            <person name="Durkin A.S."/>
            <person name="Kolonay J.F."/>
            <person name="Madupu R."/>
            <person name="Daugherty S.C."/>
            <person name="Brinkac L.M."/>
            <person name="Beanan M.J."/>
            <person name="Haft D.H."/>
            <person name="Nelson W.C."/>
            <person name="Davidsen T.M."/>
            <person name="Zafar N."/>
            <person name="Zhou L."/>
            <person name="Liu J."/>
            <person name="Yuan Q."/>
            <person name="Khouri H.M."/>
            <person name="Fedorova N.B."/>
            <person name="Tran B."/>
            <person name="Russell D."/>
            <person name="Berry K.J."/>
            <person name="Utterback T.R."/>
            <person name="Van Aken S.E."/>
            <person name="Feldblyum T.V."/>
            <person name="D'Ascenzo M."/>
            <person name="Deng W.-L."/>
            <person name="Ramos A.R."/>
            <person name="Alfano J.R."/>
            <person name="Cartinhour S."/>
            <person name="Chatterjee A.K."/>
            <person name="Delaney T.P."/>
            <person name="Lazarowitz S.G."/>
            <person name="Martin G.B."/>
            <person name="Schneider D.J."/>
            <person name="Tang X."/>
            <person name="Bender C.L."/>
            <person name="White O."/>
            <person name="Fraser C.M."/>
            <person name="Collmer A."/>
        </authorList>
    </citation>
    <scope>NUCLEOTIDE SEQUENCE [LARGE SCALE GENOMIC DNA]</scope>
    <source>
        <strain>ATCC BAA-871 / DC3000</strain>
    </source>
</reference>
<accession>Q884Z4</accession>
<sequence>MIKLKQLIAATLLLSAAFGAHAERLKDIASISGVRANQLIGYGLVVGLNGTGDQTTQTPFTLQTFNNMLSQFGIKVPAGSGTVQLKNVAAVAVYADLPAFAKPGQTVDITVSSIGNSKSLRGGALLMTPMKGVDGNVYAIAQGNLVVGGFDAEGRDGSKITVNVPSSGRIPGGASVERSVPSGFNQGNTLTLNLNRSDFTTAKRVVDKINELLGPGVAQALDGGSVRVTAPLDPGQRVDYLSILENLEVDPGQTAAKVIINSRTGTIVIGQNVKVSPAAVTHGSLTVTITEDPIVSQPGALSGGQTAVVPRSRVNAQQELHPMFKFGPGTTLDEIVRAVNQVGAAPGDLMAILEALKQAGALQADLIVI</sequence>
<comment type="function">
    <text evidence="1">Assembles around the rod to form the L-ring and probably protects the motor/basal body from shearing forces during rotation.</text>
</comment>
<comment type="subunit">
    <text evidence="1">The basal body constitutes a major portion of the flagellar organelle and consists of four rings (L,P,S, and M) mounted on a central rod.</text>
</comment>
<comment type="subcellular location">
    <subcellularLocation>
        <location evidence="1">Periplasm</location>
    </subcellularLocation>
    <subcellularLocation>
        <location evidence="1">Bacterial flagellum basal body</location>
    </subcellularLocation>
</comment>
<comment type="similarity">
    <text evidence="1">Belongs to the FlgI family.</text>
</comment>
<organism>
    <name type="scientific">Pseudomonas syringae pv. tomato (strain ATCC BAA-871 / DC3000)</name>
    <dbReference type="NCBI Taxonomy" id="223283"/>
    <lineage>
        <taxon>Bacteria</taxon>
        <taxon>Pseudomonadati</taxon>
        <taxon>Pseudomonadota</taxon>
        <taxon>Gammaproteobacteria</taxon>
        <taxon>Pseudomonadales</taxon>
        <taxon>Pseudomonadaceae</taxon>
        <taxon>Pseudomonas</taxon>
    </lineage>
</organism>
<evidence type="ECO:0000255" key="1">
    <source>
        <dbReference type="HAMAP-Rule" id="MF_00416"/>
    </source>
</evidence>
<feature type="signal peptide" evidence="1">
    <location>
        <begin position="1"/>
        <end position="22"/>
    </location>
</feature>
<feature type="chain" id="PRO_0000009515" description="Flagellar P-ring protein">
    <location>
        <begin position="23"/>
        <end position="369"/>
    </location>
</feature>
<keyword id="KW-0975">Bacterial flagellum</keyword>
<keyword id="KW-0574">Periplasm</keyword>
<keyword id="KW-1185">Reference proteome</keyword>
<keyword id="KW-0732">Signal</keyword>
<protein>
    <recommendedName>
        <fullName evidence="1">Flagellar P-ring protein</fullName>
    </recommendedName>
    <alternativeName>
        <fullName evidence="1">Basal body P-ring protein</fullName>
    </alternativeName>
</protein>